<gene>
    <name evidence="1" type="primary">kdsB</name>
    <name type="ordered locus">Cvib_0404</name>
</gene>
<comment type="function">
    <text evidence="1">Activates KDO (a required 8-carbon sugar) for incorporation into bacterial lipopolysaccharide in Gram-negative bacteria.</text>
</comment>
<comment type="catalytic activity">
    <reaction evidence="1">
        <text>3-deoxy-alpha-D-manno-oct-2-ulosonate + CTP = CMP-3-deoxy-beta-D-manno-octulosonate + diphosphate</text>
        <dbReference type="Rhea" id="RHEA:23448"/>
        <dbReference type="ChEBI" id="CHEBI:33019"/>
        <dbReference type="ChEBI" id="CHEBI:37563"/>
        <dbReference type="ChEBI" id="CHEBI:85986"/>
        <dbReference type="ChEBI" id="CHEBI:85987"/>
        <dbReference type="EC" id="2.7.7.38"/>
    </reaction>
</comment>
<comment type="pathway">
    <text evidence="1">Nucleotide-sugar biosynthesis; CMP-3-deoxy-D-manno-octulosonate biosynthesis; CMP-3-deoxy-D-manno-octulosonate from 3-deoxy-D-manno-octulosonate and CTP: step 1/1.</text>
</comment>
<comment type="pathway">
    <text evidence="1">Bacterial outer membrane biogenesis; lipopolysaccharide biosynthesis.</text>
</comment>
<comment type="subcellular location">
    <subcellularLocation>
        <location evidence="1">Cytoplasm</location>
    </subcellularLocation>
</comment>
<comment type="similarity">
    <text evidence="1">Belongs to the KdsB family.</text>
</comment>
<organism>
    <name type="scientific">Chlorobium phaeovibrioides (strain DSM 265 / 1930)</name>
    <name type="common">Prosthecochloris vibrioformis (strain DSM 265)</name>
    <dbReference type="NCBI Taxonomy" id="290318"/>
    <lineage>
        <taxon>Bacteria</taxon>
        <taxon>Pseudomonadati</taxon>
        <taxon>Chlorobiota</taxon>
        <taxon>Chlorobiia</taxon>
        <taxon>Chlorobiales</taxon>
        <taxon>Chlorobiaceae</taxon>
        <taxon>Chlorobium/Pelodictyon group</taxon>
        <taxon>Chlorobium</taxon>
    </lineage>
</organism>
<sequence>MKAVILIPARLESSRLERKMLADLEGEPLIVRTWRQAMRSTLAERVVVATDSRDIASVLEERGAEVVMTSPSASCGTERIAEAARNIEGDVFVNLQGDEPLISPDTIDLVLSPFFAADPPDCSTLVFALRPDEREQIEDPHIVKALLDRKGNALYFSRSPVPFMRNNTPSLVFYRHVGMYAFGRDVLQQFAALPVSMLEAAESLEQLRLLENGFSIRCVITTLDQPGVNTAEDLELVRSILRKESRS</sequence>
<feature type="chain" id="PRO_1000116893" description="3-deoxy-manno-octulosonate cytidylyltransferase">
    <location>
        <begin position="1"/>
        <end position="247"/>
    </location>
</feature>
<evidence type="ECO:0000255" key="1">
    <source>
        <dbReference type="HAMAP-Rule" id="MF_00057"/>
    </source>
</evidence>
<dbReference type="EC" id="2.7.7.38" evidence="1"/>
<dbReference type="EMBL" id="CP000607">
    <property type="protein sequence ID" value="ABP36426.1"/>
    <property type="molecule type" value="Genomic_DNA"/>
</dbReference>
<dbReference type="SMR" id="A4SD67"/>
<dbReference type="STRING" id="290318.Cvib_0404"/>
<dbReference type="KEGG" id="pvi:Cvib_0404"/>
<dbReference type="eggNOG" id="COG1212">
    <property type="taxonomic scope" value="Bacteria"/>
</dbReference>
<dbReference type="HOGENOM" id="CLU_065038_0_1_10"/>
<dbReference type="OrthoDB" id="9815559at2"/>
<dbReference type="UniPathway" id="UPA00030"/>
<dbReference type="UniPathway" id="UPA00358">
    <property type="reaction ID" value="UER00476"/>
</dbReference>
<dbReference type="GO" id="GO:0005829">
    <property type="term" value="C:cytosol"/>
    <property type="evidence" value="ECO:0007669"/>
    <property type="project" value="TreeGrafter"/>
</dbReference>
<dbReference type="GO" id="GO:0008690">
    <property type="term" value="F:3-deoxy-manno-octulosonate cytidylyltransferase activity"/>
    <property type="evidence" value="ECO:0007669"/>
    <property type="project" value="UniProtKB-UniRule"/>
</dbReference>
<dbReference type="GO" id="GO:0033468">
    <property type="term" value="P:CMP-keto-3-deoxy-D-manno-octulosonic acid biosynthetic process"/>
    <property type="evidence" value="ECO:0007669"/>
    <property type="project" value="UniProtKB-UniRule"/>
</dbReference>
<dbReference type="GO" id="GO:0009103">
    <property type="term" value="P:lipopolysaccharide biosynthetic process"/>
    <property type="evidence" value="ECO:0007669"/>
    <property type="project" value="UniProtKB-UniRule"/>
</dbReference>
<dbReference type="CDD" id="cd02517">
    <property type="entry name" value="CMP-KDO-Synthetase"/>
    <property type="match status" value="1"/>
</dbReference>
<dbReference type="Gene3D" id="3.90.550.10">
    <property type="entry name" value="Spore Coat Polysaccharide Biosynthesis Protein SpsA, Chain A"/>
    <property type="match status" value="1"/>
</dbReference>
<dbReference type="HAMAP" id="MF_00057">
    <property type="entry name" value="KdsB"/>
    <property type="match status" value="1"/>
</dbReference>
<dbReference type="InterPro" id="IPR003329">
    <property type="entry name" value="Cytidylyl_trans"/>
</dbReference>
<dbReference type="InterPro" id="IPR004528">
    <property type="entry name" value="KdsB"/>
</dbReference>
<dbReference type="InterPro" id="IPR029044">
    <property type="entry name" value="Nucleotide-diphossugar_trans"/>
</dbReference>
<dbReference type="NCBIfam" id="TIGR00466">
    <property type="entry name" value="kdsB"/>
    <property type="match status" value="1"/>
</dbReference>
<dbReference type="NCBIfam" id="NF003950">
    <property type="entry name" value="PRK05450.1-3"/>
    <property type="match status" value="1"/>
</dbReference>
<dbReference type="NCBIfam" id="NF003952">
    <property type="entry name" value="PRK05450.1-5"/>
    <property type="match status" value="1"/>
</dbReference>
<dbReference type="NCBIfam" id="NF009905">
    <property type="entry name" value="PRK13368.1"/>
    <property type="match status" value="1"/>
</dbReference>
<dbReference type="PANTHER" id="PTHR42866">
    <property type="entry name" value="3-DEOXY-MANNO-OCTULOSONATE CYTIDYLYLTRANSFERASE"/>
    <property type="match status" value="1"/>
</dbReference>
<dbReference type="PANTHER" id="PTHR42866:SF2">
    <property type="entry name" value="3-DEOXY-MANNO-OCTULOSONATE CYTIDYLYLTRANSFERASE, MITOCHONDRIAL"/>
    <property type="match status" value="1"/>
</dbReference>
<dbReference type="Pfam" id="PF02348">
    <property type="entry name" value="CTP_transf_3"/>
    <property type="match status" value="1"/>
</dbReference>
<dbReference type="SUPFAM" id="SSF53448">
    <property type="entry name" value="Nucleotide-diphospho-sugar transferases"/>
    <property type="match status" value="1"/>
</dbReference>
<protein>
    <recommendedName>
        <fullName evidence="1">3-deoxy-manno-octulosonate cytidylyltransferase</fullName>
        <ecNumber evidence="1">2.7.7.38</ecNumber>
    </recommendedName>
    <alternativeName>
        <fullName evidence="1">CMP-2-keto-3-deoxyoctulosonic acid synthase</fullName>
        <shortName evidence="1">CKS</shortName>
        <shortName evidence="1">CMP-KDO synthase</shortName>
    </alternativeName>
</protein>
<name>KDSB_CHLPM</name>
<proteinExistence type="inferred from homology"/>
<reference key="1">
    <citation type="submission" date="2007-03" db="EMBL/GenBank/DDBJ databases">
        <title>Complete sequence of Prosthecochloris vibrioformis DSM 265.</title>
        <authorList>
            <consortium name="US DOE Joint Genome Institute"/>
            <person name="Copeland A."/>
            <person name="Lucas S."/>
            <person name="Lapidus A."/>
            <person name="Barry K."/>
            <person name="Detter J.C."/>
            <person name="Glavina del Rio T."/>
            <person name="Hammon N."/>
            <person name="Israni S."/>
            <person name="Pitluck S."/>
            <person name="Schmutz J."/>
            <person name="Larimer F."/>
            <person name="Land M."/>
            <person name="Hauser L."/>
            <person name="Mikhailova N."/>
            <person name="Li T."/>
            <person name="Overmann J."/>
            <person name="Schuster S.C."/>
            <person name="Bryant D.A."/>
            <person name="Richardson P."/>
        </authorList>
    </citation>
    <scope>NUCLEOTIDE SEQUENCE [LARGE SCALE GENOMIC DNA]</scope>
    <source>
        <strain>DSM 265 / 1930</strain>
    </source>
</reference>
<keyword id="KW-0963">Cytoplasm</keyword>
<keyword id="KW-0448">Lipopolysaccharide biosynthesis</keyword>
<keyword id="KW-0548">Nucleotidyltransferase</keyword>
<keyword id="KW-0808">Transferase</keyword>
<accession>A4SD67</accession>